<organism>
    <name type="scientific">Rattus norvegicus</name>
    <name type="common">Rat</name>
    <dbReference type="NCBI Taxonomy" id="10116"/>
    <lineage>
        <taxon>Eukaryota</taxon>
        <taxon>Metazoa</taxon>
        <taxon>Chordata</taxon>
        <taxon>Craniata</taxon>
        <taxon>Vertebrata</taxon>
        <taxon>Euteleostomi</taxon>
        <taxon>Mammalia</taxon>
        <taxon>Eutheria</taxon>
        <taxon>Euarchontoglires</taxon>
        <taxon>Glires</taxon>
        <taxon>Rodentia</taxon>
        <taxon>Myomorpha</taxon>
        <taxon>Muroidea</taxon>
        <taxon>Muridae</taxon>
        <taxon>Murinae</taxon>
        <taxon>Rattus</taxon>
    </lineage>
</organism>
<protein>
    <recommendedName>
        <fullName>Translocator protein</fullName>
    </recommendedName>
    <alternativeName>
        <fullName>Mitochondrial benzodiazepine receptor</fullName>
    </alternativeName>
    <alternativeName>
        <fullName>PKBS</fullName>
    </alternativeName>
    <alternativeName>
        <fullName>Peripheral-type benzodiazepine receptor</fullName>
        <shortName>PBR</shortName>
    </alternativeName>
</protein>
<gene>
    <name type="primary">Tspo</name>
    <name type="synonym">Bzrp</name>
    <name type="synonym">Mbr</name>
</gene>
<name>TSPO_RAT</name>
<accession>P16257</accession>
<keyword id="KW-0903">Direct protein sequencing</keyword>
<keyword id="KW-0445">Lipid transport</keyword>
<keyword id="KW-0472">Membrane</keyword>
<keyword id="KW-0496">Mitochondrion</keyword>
<keyword id="KW-0675">Receptor</keyword>
<keyword id="KW-1185">Reference proteome</keyword>
<keyword id="KW-0812">Transmembrane</keyword>
<keyword id="KW-1133">Transmembrane helix</keyword>
<keyword id="KW-0813">Transport</keyword>
<proteinExistence type="evidence at protein level"/>
<dbReference type="EMBL" id="J05122">
    <property type="protein sequence ID" value="AAA41862.1"/>
    <property type="molecule type" value="mRNA"/>
</dbReference>
<dbReference type="EMBL" id="M84221">
    <property type="protein sequence ID" value="AAA41978.1"/>
    <property type="molecule type" value="Genomic_DNA"/>
</dbReference>
<dbReference type="PIR" id="JC1393">
    <property type="entry name" value="JC1393"/>
</dbReference>
<dbReference type="RefSeq" id="NP_036647.1">
    <property type="nucleotide sequence ID" value="NM_012515.2"/>
</dbReference>
<dbReference type="RefSeq" id="XP_038934321.1">
    <property type="nucleotide sequence ID" value="XM_039078393.2"/>
</dbReference>
<dbReference type="RefSeq" id="XP_038934322.1">
    <property type="nucleotide sequence ID" value="XM_039078394.2"/>
</dbReference>
<dbReference type="SMR" id="P16257"/>
<dbReference type="FunCoup" id="P16257">
    <property type="interactions" value="250"/>
</dbReference>
<dbReference type="STRING" id="10116.ENSRNOP00000014089"/>
<dbReference type="BindingDB" id="P16257"/>
<dbReference type="ChEMBL" id="CHEMBL4552"/>
<dbReference type="DrugCentral" id="P16257"/>
<dbReference type="GuidetoPHARMACOLOGY" id="2879"/>
<dbReference type="PhosphoSitePlus" id="P16257"/>
<dbReference type="PaxDb" id="10116-ENSRNOP00000014089"/>
<dbReference type="Ensembl" id="ENSRNOT00000014089.5">
    <property type="protein sequence ID" value="ENSRNOP00000014089.1"/>
    <property type="gene ID" value="ENSRNOG00000010549.5"/>
</dbReference>
<dbReference type="GeneID" id="24230"/>
<dbReference type="KEGG" id="rno:24230"/>
<dbReference type="UCSC" id="RGD:2228">
    <property type="organism name" value="rat"/>
</dbReference>
<dbReference type="AGR" id="RGD:2228"/>
<dbReference type="CTD" id="706"/>
<dbReference type="RGD" id="2228">
    <property type="gene designation" value="Tspo"/>
</dbReference>
<dbReference type="eggNOG" id="KOG3797">
    <property type="taxonomic scope" value="Eukaryota"/>
</dbReference>
<dbReference type="GeneTree" id="ENSGT00390000012980"/>
<dbReference type="HOGENOM" id="CLU_091805_2_1_1"/>
<dbReference type="InParanoid" id="P16257"/>
<dbReference type="OMA" id="WSWLFFG"/>
<dbReference type="OrthoDB" id="8841220at2759"/>
<dbReference type="PhylomeDB" id="P16257"/>
<dbReference type="TreeFam" id="TF342852"/>
<dbReference type="Reactome" id="R-RNO-196108">
    <property type="pathway name" value="Pregnenolone biosynthesis"/>
</dbReference>
<dbReference type="PRO" id="PR:P16257"/>
<dbReference type="Proteomes" id="UP000002494">
    <property type="component" value="Chromosome 7"/>
</dbReference>
<dbReference type="Bgee" id="ENSRNOG00000010549">
    <property type="expression patterns" value="Expressed in esophagus and 20 other cell types or tissues"/>
</dbReference>
<dbReference type="GO" id="GO:0005829">
    <property type="term" value="C:cytosol"/>
    <property type="evidence" value="ECO:0007669"/>
    <property type="project" value="Ensembl"/>
</dbReference>
<dbReference type="GO" id="GO:0016020">
    <property type="term" value="C:membrane"/>
    <property type="evidence" value="ECO:0000318"/>
    <property type="project" value="GO_Central"/>
</dbReference>
<dbReference type="GO" id="GO:0005741">
    <property type="term" value="C:mitochondrial outer membrane"/>
    <property type="evidence" value="ECO:0000314"/>
    <property type="project" value="RGD"/>
</dbReference>
<dbReference type="GO" id="GO:0005739">
    <property type="term" value="C:mitochondrion"/>
    <property type="evidence" value="ECO:0000266"/>
    <property type="project" value="RGD"/>
</dbReference>
<dbReference type="GO" id="GO:0005497">
    <property type="term" value="F:androgen binding"/>
    <property type="evidence" value="ECO:0000314"/>
    <property type="project" value="RGD"/>
</dbReference>
<dbReference type="GO" id="GO:0008503">
    <property type="term" value="F:benzodiazepine receptor activity"/>
    <property type="evidence" value="ECO:0000314"/>
    <property type="project" value="RGD"/>
</dbReference>
<dbReference type="GO" id="GO:0044325">
    <property type="term" value="F:transmembrane transporter binding"/>
    <property type="evidence" value="ECO:0000266"/>
    <property type="project" value="RGD"/>
</dbReference>
<dbReference type="GO" id="GO:0030325">
    <property type="term" value="P:adrenal gland development"/>
    <property type="evidence" value="ECO:0000270"/>
    <property type="project" value="RGD"/>
</dbReference>
<dbReference type="GO" id="GO:0048266">
    <property type="term" value="P:behavioral response to pain"/>
    <property type="evidence" value="ECO:0000315"/>
    <property type="project" value="RGD"/>
</dbReference>
<dbReference type="GO" id="GO:0071476">
    <property type="term" value="P:cellular hypotonic response"/>
    <property type="evidence" value="ECO:0000270"/>
    <property type="project" value="RGD"/>
</dbReference>
<dbReference type="GO" id="GO:0071222">
    <property type="term" value="P:cellular response to lipopolysaccharide"/>
    <property type="evidence" value="ECO:0000270"/>
    <property type="project" value="RGD"/>
</dbReference>
<dbReference type="GO" id="GO:0071294">
    <property type="term" value="P:cellular response to zinc ion"/>
    <property type="evidence" value="ECO:0000270"/>
    <property type="project" value="RGD"/>
</dbReference>
<dbReference type="GO" id="GO:0006821">
    <property type="term" value="P:chloride transport"/>
    <property type="evidence" value="ECO:0000314"/>
    <property type="project" value="RGD"/>
</dbReference>
<dbReference type="GO" id="GO:0042632">
    <property type="term" value="P:cholesterol homeostasis"/>
    <property type="evidence" value="ECO:0000315"/>
    <property type="project" value="RGD"/>
</dbReference>
<dbReference type="GO" id="GO:0060242">
    <property type="term" value="P:contact inhibition"/>
    <property type="evidence" value="ECO:0000314"/>
    <property type="project" value="RGD"/>
</dbReference>
<dbReference type="GO" id="GO:0072655">
    <property type="term" value="P:establishment of protein localization to mitochondrion"/>
    <property type="evidence" value="ECO:0000266"/>
    <property type="project" value="RGD"/>
</dbReference>
<dbReference type="GO" id="GO:0008347">
    <property type="term" value="P:glial cell migration"/>
    <property type="evidence" value="ECO:0000314"/>
    <property type="project" value="RGD"/>
</dbReference>
<dbReference type="GO" id="GO:0006869">
    <property type="term" value="P:lipid transport"/>
    <property type="evidence" value="ECO:0007669"/>
    <property type="project" value="UniProtKB-KW"/>
</dbReference>
<dbReference type="GO" id="GO:0072656">
    <property type="term" value="P:maintenance of protein location in mitochondrion"/>
    <property type="evidence" value="ECO:0000266"/>
    <property type="project" value="RGD"/>
</dbReference>
<dbReference type="GO" id="GO:0006811">
    <property type="term" value="P:monoatomic ion transport"/>
    <property type="evidence" value="ECO:0000314"/>
    <property type="project" value="RGD"/>
</dbReference>
<dbReference type="GO" id="GO:1903579">
    <property type="term" value="P:negative regulation of ATP metabolic process"/>
    <property type="evidence" value="ECO:0000266"/>
    <property type="project" value="RGD"/>
</dbReference>
<dbReference type="GO" id="GO:2000853">
    <property type="term" value="P:negative regulation of corticosterone secretion"/>
    <property type="evidence" value="ECO:0000315"/>
    <property type="project" value="RGD"/>
</dbReference>
<dbReference type="GO" id="GO:0060253">
    <property type="term" value="P:negative regulation of glial cell proliferation"/>
    <property type="evidence" value="ECO:0000314"/>
    <property type="project" value="RGD"/>
</dbReference>
<dbReference type="GO" id="GO:1901525">
    <property type="term" value="P:negative regulation of mitophagy"/>
    <property type="evidence" value="ECO:0000266"/>
    <property type="project" value="RGD"/>
</dbReference>
<dbReference type="GO" id="GO:0045019">
    <property type="term" value="P:negative regulation of nitric oxide biosynthetic process"/>
    <property type="evidence" value="ECO:0000314"/>
    <property type="project" value="RGD"/>
</dbReference>
<dbReference type="GO" id="GO:0031397">
    <property type="term" value="P:negative regulation of protein ubiquitination"/>
    <property type="evidence" value="ECO:0000266"/>
    <property type="project" value="RGD"/>
</dbReference>
<dbReference type="GO" id="GO:0032720">
    <property type="term" value="P:negative regulation of tumor necrosis factor production"/>
    <property type="evidence" value="ECO:0000314"/>
    <property type="project" value="RGD"/>
</dbReference>
<dbReference type="GO" id="GO:0014012">
    <property type="term" value="P:peripheral nervous system axon regeneration"/>
    <property type="evidence" value="ECO:0000270"/>
    <property type="project" value="RGD"/>
</dbReference>
<dbReference type="GO" id="GO:0043065">
    <property type="term" value="P:positive regulation of apoptotic process"/>
    <property type="evidence" value="ECO:0000315"/>
    <property type="project" value="RGD"/>
</dbReference>
<dbReference type="GO" id="GO:0051928">
    <property type="term" value="P:positive regulation of calcium ion transport"/>
    <property type="evidence" value="ECO:0000315"/>
    <property type="project" value="RGD"/>
</dbReference>
<dbReference type="GO" id="GO:0060252">
    <property type="term" value="P:positive regulation of glial cell proliferation"/>
    <property type="evidence" value="ECO:0000314"/>
    <property type="project" value="RGD"/>
</dbReference>
<dbReference type="GO" id="GO:0051901">
    <property type="term" value="P:positive regulation of mitochondrial depolarization"/>
    <property type="evidence" value="ECO:0000314"/>
    <property type="project" value="RGD"/>
</dbReference>
<dbReference type="GO" id="GO:0062100">
    <property type="term" value="P:positive regulation of programmed necrotic cell death"/>
    <property type="evidence" value="ECO:0000315"/>
    <property type="project" value="RGD"/>
</dbReference>
<dbReference type="GO" id="GO:2000379">
    <property type="term" value="P:positive regulation of reactive oxygen species metabolic process"/>
    <property type="evidence" value="ECO:0000314"/>
    <property type="project" value="RGD"/>
</dbReference>
<dbReference type="GO" id="GO:0050810">
    <property type="term" value="P:regulation of steroid biosynthetic process"/>
    <property type="evidence" value="ECO:0000315"/>
    <property type="project" value="RGD"/>
</dbReference>
<dbReference type="GO" id="GO:1905144">
    <property type="term" value="P:response to acetylcholine"/>
    <property type="evidence" value="ECO:0000315"/>
    <property type="project" value="RGD"/>
</dbReference>
<dbReference type="GO" id="GO:0048678">
    <property type="term" value="P:response to axon injury"/>
    <property type="evidence" value="ECO:0000270"/>
    <property type="project" value="RGD"/>
</dbReference>
<dbReference type="GO" id="GO:0010042">
    <property type="term" value="P:response to manganese ion"/>
    <property type="evidence" value="ECO:0000270"/>
    <property type="project" value="RGD"/>
</dbReference>
<dbReference type="GO" id="GO:0048265">
    <property type="term" value="P:response to pain"/>
    <property type="evidence" value="ECO:0000270"/>
    <property type="project" value="RGD"/>
</dbReference>
<dbReference type="GO" id="GO:0032570">
    <property type="term" value="P:response to progesterone"/>
    <property type="evidence" value="ECO:0000270"/>
    <property type="project" value="RGD"/>
</dbReference>
<dbReference type="GO" id="GO:0033574">
    <property type="term" value="P:response to testosterone"/>
    <property type="evidence" value="ECO:0000270"/>
    <property type="project" value="RGD"/>
</dbReference>
<dbReference type="GO" id="GO:0010266">
    <property type="term" value="P:response to vitamin B1"/>
    <property type="evidence" value="ECO:0000270"/>
    <property type="project" value="RGD"/>
</dbReference>
<dbReference type="GO" id="GO:0009410">
    <property type="term" value="P:response to xenobiotic stimulus"/>
    <property type="evidence" value="ECO:0000270"/>
    <property type="project" value="RGD"/>
</dbReference>
<dbReference type="GO" id="GO:0006694">
    <property type="term" value="P:steroid biosynthetic process"/>
    <property type="evidence" value="ECO:0000315"/>
    <property type="project" value="RGD"/>
</dbReference>
<dbReference type="CDD" id="cd15904">
    <property type="entry name" value="TSPO_MBR"/>
    <property type="match status" value="1"/>
</dbReference>
<dbReference type="FunFam" id="1.20.1260.100:FF:000001">
    <property type="entry name" value="translocator protein 2"/>
    <property type="match status" value="1"/>
</dbReference>
<dbReference type="Gene3D" id="1.20.1260.100">
    <property type="entry name" value="TspO/MBR protein"/>
    <property type="match status" value="1"/>
</dbReference>
<dbReference type="InterPro" id="IPR038330">
    <property type="entry name" value="TspO/MBR-related_sf"/>
</dbReference>
<dbReference type="InterPro" id="IPR004307">
    <property type="entry name" value="TspO_MBR"/>
</dbReference>
<dbReference type="PANTHER" id="PTHR10057">
    <property type="entry name" value="PERIPHERAL-TYPE BENZODIAZEPINE RECEPTOR"/>
    <property type="match status" value="1"/>
</dbReference>
<dbReference type="PANTHER" id="PTHR10057:SF5">
    <property type="entry name" value="TRANSLOCATOR PROTEIN"/>
    <property type="match status" value="1"/>
</dbReference>
<dbReference type="Pfam" id="PF03073">
    <property type="entry name" value="TspO_MBR"/>
    <property type="match status" value="1"/>
</dbReference>
<dbReference type="PIRSF" id="PIRSF005859">
    <property type="entry name" value="PBR"/>
    <property type="match status" value="1"/>
</dbReference>
<feature type="chain" id="PRO_0000190999" description="Translocator protein">
    <location>
        <begin position="1"/>
        <end position="169"/>
    </location>
</feature>
<feature type="topological domain" description="Mitochondrial intermembrane" evidence="1">
    <location>
        <begin position="1"/>
        <end position="5"/>
    </location>
</feature>
<feature type="transmembrane region" description="Helical; Name=1" evidence="1">
    <location>
        <begin position="6"/>
        <end position="26"/>
    </location>
</feature>
<feature type="topological domain" description="Cytoplasmic" evidence="1">
    <location>
        <begin position="27"/>
        <end position="46"/>
    </location>
</feature>
<feature type="transmembrane region" description="Helical; Name=2" evidence="1">
    <location>
        <begin position="47"/>
        <end position="67"/>
    </location>
</feature>
<feature type="topological domain" description="Mitochondrial intermembrane" evidence="1">
    <location>
        <begin position="68"/>
        <end position="79"/>
    </location>
</feature>
<feature type="transmembrane region" description="Helical; Name=3" evidence="1">
    <location>
        <begin position="80"/>
        <end position="100"/>
    </location>
</feature>
<feature type="topological domain" description="Cytoplasmic" evidence="1">
    <location>
        <begin position="101"/>
        <end position="105"/>
    </location>
</feature>
<feature type="transmembrane region" description="Helical; Name=4" evidence="1">
    <location>
        <begin position="106"/>
        <end position="126"/>
    </location>
</feature>
<feature type="topological domain" description="Mitochondrial intermembrane" evidence="1">
    <location>
        <begin position="127"/>
        <end position="134"/>
    </location>
</feature>
<feature type="transmembrane region" description="Helical; Name=5" evidence="1">
    <location>
        <begin position="135"/>
        <end position="155"/>
    </location>
</feature>
<feature type="topological domain" description="Cytoplasmic" evidence="1">
    <location>
        <begin position="156"/>
        <end position="169"/>
    </location>
</feature>
<comment type="function">
    <text evidence="1 2 3">Promotes the transport of cholesterol across mitochondrial membranes and may play a role in lipid metabolism, but its precise physiological role is controversial. It is apparently not required for steroid hormone biosynthesis (By similarity). Can bind protoporphyrin IX and may play a role in the transport of porphyrins and heme. Was initially identified as peripheral-type benzodiazepine receptor; can also bind isoquinoline carboxamides (PubMed:2555358).</text>
</comment>
<comment type="subunit">
    <text evidence="1">Interacts with TSPOAP1. Interacts with MOST-1. May interact with STAR.</text>
</comment>
<comment type="subcellular location">
    <subcellularLocation>
        <location evidence="1">Mitochondrion membrane</location>
        <topology evidence="1">Multi-pass membrane protein</topology>
    </subcellularLocation>
    <subcellularLocation>
        <location evidence="3">Membrane</location>
        <topology evidence="3">Multi-pass membrane protein</topology>
    </subcellularLocation>
</comment>
<comment type="tissue specificity">
    <text evidence="3">Highly expressed in adrenal gland.</text>
</comment>
<comment type="PTM">
    <text>The N-terminus is blocked.</text>
</comment>
<comment type="similarity">
    <text evidence="4">Belongs to the TspO/BZRP family.</text>
</comment>
<sequence length="169" mass="18940">MSQSWVPAVGLTLVPSLGGFMGAYFVRGEGLRWYASLQKPSWHPPRWTLAPIWGTLYSAMGYGSYIIWKELGGFTEEAMVPLGLYTGQLALNWAWPPIFFGARQMGWALVDLMLVSGVATATTLAWHRVSPPAARLLYPYLAWLAFATMLNYYVWRDNSGRRGGSRLTE</sequence>
<reference key="1">
    <citation type="journal article" date="1989" name="J. Biol. Chem.">
        <title>Molecular cloning and expression of cDNA encoding a peripheral-type benzodiazepine receptor.</title>
        <authorList>
            <person name="Sprengel R."/>
            <person name="Werner P."/>
            <person name="Seeburg P.H."/>
            <person name="Mukhin A.G."/>
            <person name="Santi M.R."/>
            <person name="Grayson D.R."/>
            <person name="Guidotti A."/>
            <person name="Krueger K.E."/>
        </authorList>
    </citation>
    <scope>NUCLEOTIDE SEQUENCE [MRNA]</scope>
    <scope>PARTIAL PROTEIN SEQUENCE</scope>
    <scope>FUNCTION</scope>
    <scope>TISSUE SPECIFICITY</scope>
    <scope>SUBCELLULAR LOCATION</scope>
    <source>
        <tissue>Adrenal gland</tissue>
    </source>
</reference>
<reference key="2">
    <citation type="journal article" date="1992" name="Gene">
        <title>Structure of the rat gene encoding the mitochondrial benzodiazepine receptor.</title>
        <authorList>
            <person name="Casalotti S.O."/>
            <person name="Pelaia G."/>
            <person name="Yakovlev A.G."/>
            <person name="Csikos T."/>
            <person name="Grayson D.R."/>
            <person name="Krueger K.E."/>
        </authorList>
    </citation>
    <scope>NUCLEOTIDE SEQUENCE [GENOMIC DNA]</scope>
    <source>
        <strain>Wistar</strain>
    </source>
</reference>
<reference key="3">
    <citation type="journal article" date="2010" name="Synapse">
        <title>In vivo binding of protoporphyrin IX to rat translocator protein imaged with positron emission tomography.</title>
        <authorList>
            <person name="Ozaki H."/>
            <person name="Zoghbi S.S."/>
            <person name="Hong J."/>
            <person name="Verma A."/>
            <person name="Pike V.W."/>
            <person name="Innis R.B."/>
            <person name="Fujita M."/>
        </authorList>
    </citation>
    <scope>FUNCTION IN PROTOPORPHYRIN BINDING</scope>
</reference>
<evidence type="ECO:0000250" key="1"/>
<evidence type="ECO:0000269" key="2">
    <source>
    </source>
</evidence>
<evidence type="ECO:0000269" key="3">
    <source>
    </source>
</evidence>
<evidence type="ECO:0000305" key="4"/>